<protein>
    <recommendedName>
        <fullName evidence="1">Glutamyl-Q tRNA(Asp) synthetase</fullName>
        <shortName evidence="1">Glu-Q-RSs</shortName>
        <ecNumber evidence="1">6.1.1.-</ecNumber>
    </recommendedName>
</protein>
<name>GLUQ_SHEFN</name>
<keyword id="KW-0030">Aminoacyl-tRNA synthetase</keyword>
<keyword id="KW-0067">ATP-binding</keyword>
<keyword id="KW-0436">Ligase</keyword>
<keyword id="KW-0479">Metal-binding</keyword>
<keyword id="KW-0547">Nucleotide-binding</keyword>
<keyword id="KW-1185">Reference proteome</keyword>
<keyword id="KW-0862">Zinc</keyword>
<gene>
    <name evidence="1" type="primary">gluQ</name>
    <name type="ordered locus">Sfri_3277</name>
</gene>
<proteinExistence type="inferred from homology"/>
<accession>Q07Y01</accession>
<comment type="function">
    <text evidence="1">Catalyzes the tRNA-independent activation of glutamate in presence of ATP and the subsequent transfer of glutamate onto a tRNA(Asp). Glutamate is transferred on the 2-amino-5-(4,5-dihydroxy-2-cyclopenten-1-yl) moiety of the queuosine in the wobble position of the QUC anticodon.</text>
</comment>
<comment type="cofactor">
    <cofactor evidence="1">
        <name>Zn(2+)</name>
        <dbReference type="ChEBI" id="CHEBI:29105"/>
    </cofactor>
    <text evidence="1">Binds 1 zinc ion per subunit.</text>
</comment>
<comment type="similarity">
    <text evidence="1">Belongs to the class-I aminoacyl-tRNA synthetase family. GluQ subfamily.</text>
</comment>
<dbReference type="EC" id="6.1.1.-" evidence="1"/>
<dbReference type="EMBL" id="CP000447">
    <property type="protein sequence ID" value="ABI73113.1"/>
    <property type="molecule type" value="Genomic_DNA"/>
</dbReference>
<dbReference type="RefSeq" id="WP_011638716.1">
    <property type="nucleotide sequence ID" value="NC_008345.1"/>
</dbReference>
<dbReference type="SMR" id="Q07Y01"/>
<dbReference type="STRING" id="318167.Sfri_3277"/>
<dbReference type="KEGG" id="sfr:Sfri_3277"/>
<dbReference type="eggNOG" id="COG0008">
    <property type="taxonomic scope" value="Bacteria"/>
</dbReference>
<dbReference type="HOGENOM" id="CLU_015768_0_1_6"/>
<dbReference type="OrthoDB" id="9807503at2"/>
<dbReference type="Proteomes" id="UP000000684">
    <property type="component" value="Chromosome"/>
</dbReference>
<dbReference type="GO" id="GO:0005829">
    <property type="term" value="C:cytosol"/>
    <property type="evidence" value="ECO:0007669"/>
    <property type="project" value="TreeGrafter"/>
</dbReference>
<dbReference type="GO" id="GO:0005524">
    <property type="term" value="F:ATP binding"/>
    <property type="evidence" value="ECO:0007669"/>
    <property type="project" value="UniProtKB-KW"/>
</dbReference>
<dbReference type="GO" id="GO:0004818">
    <property type="term" value="F:glutamate-tRNA ligase activity"/>
    <property type="evidence" value="ECO:0007669"/>
    <property type="project" value="TreeGrafter"/>
</dbReference>
<dbReference type="GO" id="GO:0008270">
    <property type="term" value="F:zinc ion binding"/>
    <property type="evidence" value="ECO:0007669"/>
    <property type="project" value="UniProtKB-UniRule"/>
</dbReference>
<dbReference type="GO" id="GO:0006424">
    <property type="term" value="P:glutamyl-tRNA aminoacylation"/>
    <property type="evidence" value="ECO:0007669"/>
    <property type="project" value="InterPro"/>
</dbReference>
<dbReference type="GO" id="GO:0006400">
    <property type="term" value="P:tRNA modification"/>
    <property type="evidence" value="ECO:0007669"/>
    <property type="project" value="InterPro"/>
</dbReference>
<dbReference type="FunFam" id="3.40.50.620:FF:000093">
    <property type="entry name" value="Glutamyl-Q tRNA(Asp) synthetase"/>
    <property type="match status" value="1"/>
</dbReference>
<dbReference type="Gene3D" id="3.40.50.620">
    <property type="entry name" value="HUPs"/>
    <property type="match status" value="1"/>
</dbReference>
<dbReference type="HAMAP" id="MF_01428">
    <property type="entry name" value="Glu_Q_tRNA_synth"/>
    <property type="match status" value="1"/>
</dbReference>
<dbReference type="InterPro" id="IPR022380">
    <property type="entry name" value="Glu-Q_tRNA(Asp)_Synthase"/>
</dbReference>
<dbReference type="InterPro" id="IPR000924">
    <property type="entry name" value="Glu/Gln-tRNA-synth"/>
</dbReference>
<dbReference type="InterPro" id="IPR020058">
    <property type="entry name" value="Glu/Gln-tRNA-synth_Ib_cat-dom"/>
</dbReference>
<dbReference type="InterPro" id="IPR049940">
    <property type="entry name" value="GluQ/Sye"/>
</dbReference>
<dbReference type="InterPro" id="IPR014729">
    <property type="entry name" value="Rossmann-like_a/b/a_fold"/>
</dbReference>
<dbReference type="NCBIfam" id="NF004314">
    <property type="entry name" value="PRK05710.1-3"/>
    <property type="match status" value="1"/>
</dbReference>
<dbReference type="NCBIfam" id="TIGR03838">
    <property type="entry name" value="queuosine_YadB"/>
    <property type="match status" value="1"/>
</dbReference>
<dbReference type="PANTHER" id="PTHR43311">
    <property type="entry name" value="GLUTAMATE--TRNA LIGASE"/>
    <property type="match status" value="1"/>
</dbReference>
<dbReference type="PANTHER" id="PTHR43311:SF1">
    <property type="entry name" value="GLUTAMYL-Q TRNA(ASP) SYNTHETASE"/>
    <property type="match status" value="1"/>
</dbReference>
<dbReference type="Pfam" id="PF00749">
    <property type="entry name" value="tRNA-synt_1c"/>
    <property type="match status" value="2"/>
</dbReference>
<dbReference type="PRINTS" id="PR00987">
    <property type="entry name" value="TRNASYNTHGLU"/>
</dbReference>
<dbReference type="SUPFAM" id="SSF52374">
    <property type="entry name" value="Nucleotidylyl transferase"/>
    <property type="match status" value="1"/>
</dbReference>
<reference key="1">
    <citation type="submission" date="2006-08" db="EMBL/GenBank/DDBJ databases">
        <title>Complete sequence of Shewanella frigidimarina NCIMB 400.</title>
        <authorList>
            <consortium name="US DOE Joint Genome Institute"/>
            <person name="Copeland A."/>
            <person name="Lucas S."/>
            <person name="Lapidus A."/>
            <person name="Barry K."/>
            <person name="Detter J.C."/>
            <person name="Glavina del Rio T."/>
            <person name="Hammon N."/>
            <person name="Israni S."/>
            <person name="Dalin E."/>
            <person name="Tice H."/>
            <person name="Pitluck S."/>
            <person name="Fredrickson J.K."/>
            <person name="Kolker E."/>
            <person name="McCuel L.A."/>
            <person name="DiChristina T."/>
            <person name="Nealson K.H."/>
            <person name="Newman D."/>
            <person name="Tiedje J.M."/>
            <person name="Zhou J."/>
            <person name="Romine M.F."/>
            <person name="Culley D.E."/>
            <person name="Serres M."/>
            <person name="Chertkov O."/>
            <person name="Brettin T."/>
            <person name="Bruce D."/>
            <person name="Han C."/>
            <person name="Tapia R."/>
            <person name="Gilna P."/>
            <person name="Schmutz J."/>
            <person name="Larimer F."/>
            <person name="Land M."/>
            <person name="Hauser L."/>
            <person name="Kyrpides N."/>
            <person name="Mikhailova N."/>
            <person name="Richardson P."/>
        </authorList>
    </citation>
    <scope>NUCLEOTIDE SEQUENCE [LARGE SCALE GENOMIC DNA]</scope>
    <source>
        <strain>NCIMB 400</strain>
    </source>
</reference>
<evidence type="ECO:0000255" key="1">
    <source>
        <dbReference type="HAMAP-Rule" id="MF_01428"/>
    </source>
</evidence>
<feature type="chain" id="PRO_1000024368" description="Glutamyl-Q tRNA(Asp) synthetase">
    <location>
        <begin position="1"/>
        <end position="293"/>
    </location>
</feature>
<feature type="short sequence motif" description="'HIGH' region">
    <location>
        <begin position="12"/>
        <end position="22"/>
    </location>
</feature>
<feature type="short sequence motif" description="'KMSKS' region">
    <location>
        <begin position="228"/>
        <end position="232"/>
    </location>
</feature>
<feature type="binding site" evidence="1">
    <location>
        <begin position="9"/>
        <end position="13"/>
    </location>
    <ligand>
        <name>L-glutamate</name>
        <dbReference type="ChEBI" id="CHEBI:29985"/>
    </ligand>
</feature>
<feature type="binding site" evidence="1">
    <location>
        <position position="45"/>
    </location>
    <ligand>
        <name>L-glutamate</name>
        <dbReference type="ChEBI" id="CHEBI:29985"/>
    </ligand>
</feature>
<feature type="binding site" evidence="1">
    <location>
        <position position="101"/>
    </location>
    <ligand>
        <name>Zn(2+)</name>
        <dbReference type="ChEBI" id="CHEBI:29105"/>
    </ligand>
</feature>
<feature type="binding site" evidence="1">
    <location>
        <position position="103"/>
    </location>
    <ligand>
        <name>Zn(2+)</name>
        <dbReference type="ChEBI" id="CHEBI:29105"/>
    </ligand>
</feature>
<feature type="binding site" evidence="1">
    <location>
        <position position="115"/>
    </location>
    <ligand>
        <name>Zn(2+)</name>
        <dbReference type="ChEBI" id="CHEBI:29105"/>
    </ligand>
</feature>
<feature type="binding site" evidence="1">
    <location>
        <position position="119"/>
    </location>
    <ligand>
        <name>Zn(2+)</name>
        <dbReference type="ChEBI" id="CHEBI:29105"/>
    </ligand>
</feature>
<feature type="binding site" evidence="1">
    <location>
        <position position="172"/>
    </location>
    <ligand>
        <name>L-glutamate</name>
        <dbReference type="ChEBI" id="CHEBI:29985"/>
    </ligand>
</feature>
<feature type="binding site" evidence="1">
    <location>
        <position position="190"/>
    </location>
    <ligand>
        <name>L-glutamate</name>
        <dbReference type="ChEBI" id="CHEBI:29985"/>
    </ligand>
</feature>
<feature type="binding site" evidence="1">
    <location>
        <position position="231"/>
    </location>
    <ligand>
        <name>ATP</name>
        <dbReference type="ChEBI" id="CHEBI:30616"/>
    </ligand>
</feature>
<organism>
    <name type="scientific">Shewanella frigidimarina (strain NCIMB 400)</name>
    <dbReference type="NCBI Taxonomy" id="318167"/>
    <lineage>
        <taxon>Bacteria</taxon>
        <taxon>Pseudomonadati</taxon>
        <taxon>Pseudomonadota</taxon>
        <taxon>Gammaproteobacteria</taxon>
        <taxon>Alteromonadales</taxon>
        <taxon>Shewanellaceae</taxon>
        <taxon>Shewanella</taxon>
    </lineage>
</organism>
<sequence>MIPPSYIGRFAPSPSGSLHFGSLVAALGSYLRAHSQQGQWLVRIEDIDPPREVPGASDNILRTLDAYGLHWHGTVLFQQQRYQVYQDQIEAFIASDLAYYCQCTRKIIQTSGGVYDGRCGRLQPRLTHGAIRIRNHVKVDHFVDKLQGPVVVDKAFAEEDFIIKRSDGLYAYQLAVVLDDAYQGITEVVRGCDLLEASCRQISLFTQLEFTPPDWLHLPLVCAEKGFKLSKQNYAPAIDVIHPQASINAALTFLGQKAVDVDSVEVMLKQAVEQFDLSTIPAQKEIVLSTIND</sequence>